<gene>
    <name evidence="1" type="primary">murC</name>
    <name type="ordered locus">CLL_A0145</name>
</gene>
<keyword id="KW-0067">ATP-binding</keyword>
<keyword id="KW-0131">Cell cycle</keyword>
<keyword id="KW-0132">Cell division</keyword>
<keyword id="KW-0133">Cell shape</keyword>
<keyword id="KW-0961">Cell wall biogenesis/degradation</keyword>
<keyword id="KW-0963">Cytoplasm</keyword>
<keyword id="KW-0436">Ligase</keyword>
<keyword id="KW-0547">Nucleotide-binding</keyword>
<keyword id="KW-0573">Peptidoglycan synthesis</keyword>
<sequence length="460" mass="50969">MSFDFIKDRDKKVHFIGIGGISMSGLAAVLLNSGYKVSGSDFKESEILKKLRLSGADIYIGHSEKNIKDVDLVVYTAAIPENNPELIYAKENNIELMNRAEFLGSIMKGHKYNVAISGAHGKTTCTSMLSNITLKANLDPTILVGGELDIIGGNFRIGSSDYFITEACEYKRSFLSFFPYVGVILNIDADHLDYYKDIDEITETFGQFADLIPNDGYLIGYVGDSRVKEILFKAKCNTLSYGFENADVTARNITFNEKGCASFDVYKHNDKLFDLTLSNPGEHNILNALSSICVSLIFDVNYDDIICGLSECKGAHKRFEYKGEVNGVTVIDDYAHHPVEIKATLNTSKKIPHNKTFCVFQPHTYTRTKTLFDEFTDAFFDADEVVLMDIYAAREKDTGLVSSNDLGVALRAKGVKCTNVHSHDEALEYLKNSAKPNDLLLTVGAGDVVIVGEKYLNQGK</sequence>
<dbReference type="EC" id="6.3.2.8" evidence="1"/>
<dbReference type="EMBL" id="CP001056">
    <property type="protein sequence ID" value="ACD22444.1"/>
    <property type="molecule type" value="Genomic_DNA"/>
</dbReference>
<dbReference type="SMR" id="B2TI04"/>
<dbReference type="KEGG" id="cbk:CLL_A0145"/>
<dbReference type="PATRIC" id="fig|935198.13.peg.135"/>
<dbReference type="HOGENOM" id="CLU_028104_1_0_9"/>
<dbReference type="UniPathway" id="UPA00219"/>
<dbReference type="Proteomes" id="UP000001195">
    <property type="component" value="Chromosome"/>
</dbReference>
<dbReference type="GO" id="GO:0005737">
    <property type="term" value="C:cytoplasm"/>
    <property type="evidence" value="ECO:0007669"/>
    <property type="project" value="UniProtKB-SubCell"/>
</dbReference>
<dbReference type="GO" id="GO:0005524">
    <property type="term" value="F:ATP binding"/>
    <property type="evidence" value="ECO:0007669"/>
    <property type="project" value="UniProtKB-UniRule"/>
</dbReference>
<dbReference type="GO" id="GO:0008763">
    <property type="term" value="F:UDP-N-acetylmuramate-L-alanine ligase activity"/>
    <property type="evidence" value="ECO:0007669"/>
    <property type="project" value="UniProtKB-UniRule"/>
</dbReference>
<dbReference type="GO" id="GO:0051301">
    <property type="term" value="P:cell division"/>
    <property type="evidence" value="ECO:0007669"/>
    <property type="project" value="UniProtKB-KW"/>
</dbReference>
<dbReference type="GO" id="GO:0071555">
    <property type="term" value="P:cell wall organization"/>
    <property type="evidence" value="ECO:0007669"/>
    <property type="project" value="UniProtKB-KW"/>
</dbReference>
<dbReference type="GO" id="GO:0009252">
    <property type="term" value="P:peptidoglycan biosynthetic process"/>
    <property type="evidence" value="ECO:0007669"/>
    <property type="project" value="UniProtKB-UniRule"/>
</dbReference>
<dbReference type="GO" id="GO:0008360">
    <property type="term" value="P:regulation of cell shape"/>
    <property type="evidence" value="ECO:0007669"/>
    <property type="project" value="UniProtKB-KW"/>
</dbReference>
<dbReference type="Gene3D" id="3.90.190.20">
    <property type="entry name" value="Mur ligase, C-terminal domain"/>
    <property type="match status" value="1"/>
</dbReference>
<dbReference type="Gene3D" id="3.40.1190.10">
    <property type="entry name" value="Mur-like, catalytic domain"/>
    <property type="match status" value="1"/>
</dbReference>
<dbReference type="Gene3D" id="3.40.50.720">
    <property type="entry name" value="NAD(P)-binding Rossmann-like Domain"/>
    <property type="match status" value="1"/>
</dbReference>
<dbReference type="HAMAP" id="MF_00046">
    <property type="entry name" value="MurC"/>
    <property type="match status" value="1"/>
</dbReference>
<dbReference type="InterPro" id="IPR036565">
    <property type="entry name" value="Mur-like_cat_sf"/>
</dbReference>
<dbReference type="InterPro" id="IPR004101">
    <property type="entry name" value="Mur_ligase_C"/>
</dbReference>
<dbReference type="InterPro" id="IPR036615">
    <property type="entry name" value="Mur_ligase_C_dom_sf"/>
</dbReference>
<dbReference type="InterPro" id="IPR013221">
    <property type="entry name" value="Mur_ligase_cen"/>
</dbReference>
<dbReference type="InterPro" id="IPR000713">
    <property type="entry name" value="Mur_ligase_N"/>
</dbReference>
<dbReference type="InterPro" id="IPR050061">
    <property type="entry name" value="MurCDEF_pg_biosynth"/>
</dbReference>
<dbReference type="InterPro" id="IPR005758">
    <property type="entry name" value="UDP-N-AcMur_Ala_ligase_MurC"/>
</dbReference>
<dbReference type="NCBIfam" id="TIGR01082">
    <property type="entry name" value="murC"/>
    <property type="match status" value="1"/>
</dbReference>
<dbReference type="PANTHER" id="PTHR43445:SF3">
    <property type="entry name" value="UDP-N-ACETYLMURAMATE--L-ALANINE LIGASE"/>
    <property type="match status" value="1"/>
</dbReference>
<dbReference type="PANTHER" id="PTHR43445">
    <property type="entry name" value="UDP-N-ACETYLMURAMATE--L-ALANINE LIGASE-RELATED"/>
    <property type="match status" value="1"/>
</dbReference>
<dbReference type="Pfam" id="PF01225">
    <property type="entry name" value="Mur_ligase"/>
    <property type="match status" value="1"/>
</dbReference>
<dbReference type="Pfam" id="PF02875">
    <property type="entry name" value="Mur_ligase_C"/>
    <property type="match status" value="1"/>
</dbReference>
<dbReference type="Pfam" id="PF08245">
    <property type="entry name" value="Mur_ligase_M"/>
    <property type="match status" value="1"/>
</dbReference>
<dbReference type="SUPFAM" id="SSF51984">
    <property type="entry name" value="MurCD N-terminal domain"/>
    <property type="match status" value="1"/>
</dbReference>
<dbReference type="SUPFAM" id="SSF53623">
    <property type="entry name" value="MurD-like peptide ligases, catalytic domain"/>
    <property type="match status" value="1"/>
</dbReference>
<dbReference type="SUPFAM" id="SSF53244">
    <property type="entry name" value="MurD-like peptide ligases, peptide-binding domain"/>
    <property type="match status" value="1"/>
</dbReference>
<accession>B2TI04</accession>
<feature type="chain" id="PRO_1000091090" description="UDP-N-acetylmuramate--L-alanine ligase">
    <location>
        <begin position="1"/>
        <end position="460"/>
    </location>
</feature>
<feature type="binding site" evidence="1">
    <location>
        <begin position="118"/>
        <end position="124"/>
    </location>
    <ligand>
        <name>ATP</name>
        <dbReference type="ChEBI" id="CHEBI:30616"/>
    </ligand>
</feature>
<organism>
    <name type="scientific">Clostridium botulinum (strain Eklund 17B / Type B)</name>
    <dbReference type="NCBI Taxonomy" id="935198"/>
    <lineage>
        <taxon>Bacteria</taxon>
        <taxon>Bacillati</taxon>
        <taxon>Bacillota</taxon>
        <taxon>Clostridia</taxon>
        <taxon>Eubacteriales</taxon>
        <taxon>Clostridiaceae</taxon>
        <taxon>Clostridium</taxon>
    </lineage>
</organism>
<name>MURC_CLOBB</name>
<protein>
    <recommendedName>
        <fullName evidence="1">UDP-N-acetylmuramate--L-alanine ligase</fullName>
        <ecNumber evidence="1">6.3.2.8</ecNumber>
    </recommendedName>
    <alternativeName>
        <fullName evidence="1">UDP-N-acetylmuramoyl-L-alanine synthetase</fullName>
    </alternativeName>
</protein>
<comment type="function">
    <text evidence="1">Cell wall formation.</text>
</comment>
<comment type="catalytic activity">
    <reaction evidence="1">
        <text>UDP-N-acetyl-alpha-D-muramate + L-alanine + ATP = UDP-N-acetyl-alpha-D-muramoyl-L-alanine + ADP + phosphate + H(+)</text>
        <dbReference type="Rhea" id="RHEA:23372"/>
        <dbReference type="ChEBI" id="CHEBI:15378"/>
        <dbReference type="ChEBI" id="CHEBI:30616"/>
        <dbReference type="ChEBI" id="CHEBI:43474"/>
        <dbReference type="ChEBI" id="CHEBI:57972"/>
        <dbReference type="ChEBI" id="CHEBI:70757"/>
        <dbReference type="ChEBI" id="CHEBI:83898"/>
        <dbReference type="ChEBI" id="CHEBI:456216"/>
        <dbReference type="EC" id="6.3.2.8"/>
    </reaction>
</comment>
<comment type="pathway">
    <text evidence="1">Cell wall biogenesis; peptidoglycan biosynthesis.</text>
</comment>
<comment type="subcellular location">
    <subcellularLocation>
        <location evidence="1">Cytoplasm</location>
    </subcellularLocation>
</comment>
<comment type="similarity">
    <text evidence="1">Belongs to the MurCDEF family.</text>
</comment>
<evidence type="ECO:0000255" key="1">
    <source>
        <dbReference type="HAMAP-Rule" id="MF_00046"/>
    </source>
</evidence>
<proteinExistence type="inferred from homology"/>
<reference key="1">
    <citation type="submission" date="2008-04" db="EMBL/GenBank/DDBJ databases">
        <title>Complete sequence of Clostridium botulinum strain Eklund.</title>
        <authorList>
            <person name="Brinkac L.M."/>
            <person name="Brown J.L."/>
            <person name="Bruce D."/>
            <person name="Detter C."/>
            <person name="Munk C."/>
            <person name="Smith L.A."/>
            <person name="Smith T.J."/>
            <person name="Sutton G."/>
            <person name="Brettin T.S."/>
        </authorList>
    </citation>
    <scope>NUCLEOTIDE SEQUENCE [LARGE SCALE GENOMIC DNA]</scope>
    <source>
        <strain>Eklund 17B / Type B</strain>
    </source>
</reference>